<evidence type="ECO:0000255" key="1">
    <source>
        <dbReference type="HAMAP-Rule" id="MF_00249"/>
    </source>
</evidence>
<gene>
    <name evidence="1" type="primary">hslU</name>
    <name type="ordered locus">RPR_04490</name>
</gene>
<organism>
    <name type="scientific">Rickettsia peacockii (strain Rustic)</name>
    <dbReference type="NCBI Taxonomy" id="562019"/>
    <lineage>
        <taxon>Bacteria</taxon>
        <taxon>Pseudomonadati</taxon>
        <taxon>Pseudomonadota</taxon>
        <taxon>Alphaproteobacteria</taxon>
        <taxon>Rickettsiales</taxon>
        <taxon>Rickettsiaceae</taxon>
        <taxon>Rickettsieae</taxon>
        <taxon>Rickettsia</taxon>
        <taxon>spotted fever group</taxon>
    </lineage>
</organism>
<protein>
    <recommendedName>
        <fullName evidence="1">ATP-dependent protease ATPase subunit HslU</fullName>
    </recommendedName>
    <alternativeName>
        <fullName evidence="1">Unfoldase HslU</fullName>
    </alternativeName>
</protein>
<comment type="function">
    <text evidence="1">ATPase subunit of a proteasome-like degradation complex; this subunit has chaperone activity. The binding of ATP and its subsequent hydrolysis by HslU are essential for unfolding of protein substrates subsequently hydrolyzed by HslV. HslU recognizes the N-terminal part of its protein substrates and unfolds these before they are guided to HslV for hydrolysis.</text>
</comment>
<comment type="subunit">
    <text evidence="1">A double ring-shaped homohexamer of HslV is capped on each side by a ring-shaped HslU homohexamer. The assembly of the HslU/HslV complex is dependent on binding of ATP.</text>
</comment>
<comment type="subcellular location">
    <subcellularLocation>
        <location evidence="1">Cytoplasm</location>
    </subcellularLocation>
</comment>
<comment type="similarity">
    <text evidence="1">Belongs to the ClpX chaperone family. HslU subfamily.</text>
</comment>
<proteinExistence type="inferred from homology"/>
<feature type="chain" id="PRO_1000204529" description="ATP-dependent protease ATPase subunit HslU">
    <location>
        <begin position="1"/>
        <end position="450"/>
    </location>
</feature>
<feature type="binding site" evidence="1">
    <location>
        <position position="29"/>
    </location>
    <ligand>
        <name>ATP</name>
        <dbReference type="ChEBI" id="CHEBI:30616"/>
    </ligand>
</feature>
<feature type="binding site" evidence="1">
    <location>
        <begin position="71"/>
        <end position="76"/>
    </location>
    <ligand>
        <name>ATP</name>
        <dbReference type="ChEBI" id="CHEBI:30616"/>
    </ligand>
</feature>
<feature type="binding site" evidence="1">
    <location>
        <position position="261"/>
    </location>
    <ligand>
        <name>ATP</name>
        <dbReference type="ChEBI" id="CHEBI:30616"/>
    </ligand>
</feature>
<feature type="binding site" evidence="1">
    <location>
        <position position="328"/>
    </location>
    <ligand>
        <name>ATP</name>
        <dbReference type="ChEBI" id="CHEBI:30616"/>
    </ligand>
</feature>
<feature type="binding site" evidence="1">
    <location>
        <position position="400"/>
    </location>
    <ligand>
        <name>ATP</name>
        <dbReference type="ChEBI" id="CHEBI:30616"/>
    </ligand>
</feature>
<accession>C4K1X4</accession>
<reference key="1">
    <citation type="journal article" date="2009" name="PLoS ONE">
        <title>Genome sequence of the endosymbiont Rickettsia peacockii and comparison with virulent Rickettsia rickettsii: identification of virulence factors.</title>
        <authorList>
            <person name="Felsheim R.F."/>
            <person name="Kurtti T.J."/>
            <person name="Munderloh U.G."/>
        </authorList>
    </citation>
    <scope>NUCLEOTIDE SEQUENCE [LARGE SCALE GENOMIC DNA]</scope>
    <source>
        <strain>Rustic</strain>
    </source>
</reference>
<name>HSLU_RICPU</name>
<sequence>MKATKTTYKKDPMGLTPSQIVNELNRFIVGQEKAKKAVAIALRNRCRRKRVEGNLRNEIVPKNILMIGSTGVGKTEIARRLAKLTNSPFYKIEATKFTEVGYVGRDVESIIRDLVEIAVNTEKTLAKTKVDIHAREKAIERILDSLVGKTSSSETREKFKEKILNGELDDTEIEISVADTTPVGGGSFEIPGMPGASMGVLNLGDMIGRALGSSKTKTKKMLVKDAMAIIIPEESEKLIDQEKIIQQAINLAENDGIVFIDEIDKIASTGSSGAKNAEISREGVQRDLLPLIEGTTVNTKYGPVKTDHILFIASGAFHIAKPSDLLPELQGRLPIRVELNSLTKDDMIKILLEPETSLIKQYSALIGTEDVRLEFAASAIEKIADYAITVNLEVEDIGARRLHTILENLLEDISFEASEMKGKKITIDDKFVENQLSKIITNLDLAKFVL</sequence>
<keyword id="KW-0067">ATP-binding</keyword>
<keyword id="KW-0143">Chaperone</keyword>
<keyword id="KW-0963">Cytoplasm</keyword>
<keyword id="KW-0547">Nucleotide-binding</keyword>
<dbReference type="EMBL" id="CP001227">
    <property type="protein sequence ID" value="ACR47572.1"/>
    <property type="molecule type" value="Genomic_DNA"/>
</dbReference>
<dbReference type="RefSeq" id="WP_012736792.1">
    <property type="nucleotide sequence ID" value="NC_012730.1"/>
</dbReference>
<dbReference type="SMR" id="C4K1X4"/>
<dbReference type="KEGG" id="rpk:RPR_04490"/>
<dbReference type="HOGENOM" id="CLU_033123_0_0_5"/>
<dbReference type="Proteomes" id="UP000005015">
    <property type="component" value="Chromosome"/>
</dbReference>
<dbReference type="GO" id="GO:0009376">
    <property type="term" value="C:HslUV protease complex"/>
    <property type="evidence" value="ECO:0007669"/>
    <property type="project" value="UniProtKB-UniRule"/>
</dbReference>
<dbReference type="GO" id="GO:0005524">
    <property type="term" value="F:ATP binding"/>
    <property type="evidence" value="ECO:0007669"/>
    <property type="project" value="UniProtKB-UniRule"/>
</dbReference>
<dbReference type="GO" id="GO:0016887">
    <property type="term" value="F:ATP hydrolysis activity"/>
    <property type="evidence" value="ECO:0007669"/>
    <property type="project" value="InterPro"/>
</dbReference>
<dbReference type="GO" id="GO:0003677">
    <property type="term" value="F:DNA binding"/>
    <property type="evidence" value="ECO:0007669"/>
    <property type="project" value="InterPro"/>
</dbReference>
<dbReference type="GO" id="GO:0008233">
    <property type="term" value="F:peptidase activity"/>
    <property type="evidence" value="ECO:0007669"/>
    <property type="project" value="InterPro"/>
</dbReference>
<dbReference type="GO" id="GO:0036402">
    <property type="term" value="F:proteasome-activating activity"/>
    <property type="evidence" value="ECO:0007669"/>
    <property type="project" value="UniProtKB-UniRule"/>
</dbReference>
<dbReference type="GO" id="GO:0043335">
    <property type="term" value="P:protein unfolding"/>
    <property type="evidence" value="ECO:0007669"/>
    <property type="project" value="UniProtKB-UniRule"/>
</dbReference>
<dbReference type="GO" id="GO:0051603">
    <property type="term" value="P:proteolysis involved in protein catabolic process"/>
    <property type="evidence" value="ECO:0007669"/>
    <property type="project" value="TreeGrafter"/>
</dbReference>
<dbReference type="CDD" id="cd19498">
    <property type="entry name" value="RecA-like_HslU"/>
    <property type="match status" value="1"/>
</dbReference>
<dbReference type="FunFam" id="3.40.50.300:FF:000213">
    <property type="entry name" value="ATP-dependent protease ATPase subunit HslU"/>
    <property type="match status" value="1"/>
</dbReference>
<dbReference type="Gene3D" id="1.10.8.60">
    <property type="match status" value="1"/>
</dbReference>
<dbReference type="Gene3D" id="3.40.50.300">
    <property type="entry name" value="P-loop containing nucleotide triphosphate hydrolases"/>
    <property type="match status" value="2"/>
</dbReference>
<dbReference type="HAMAP" id="MF_00249">
    <property type="entry name" value="HslU"/>
    <property type="match status" value="1"/>
</dbReference>
<dbReference type="InterPro" id="IPR003593">
    <property type="entry name" value="AAA+_ATPase"/>
</dbReference>
<dbReference type="InterPro" id="IPR050052">
    <property type="entry name" value="ATP-dep_Clp_protease_ClpX"/>
</dbReference>
<dbReference type="InterPro" id="IPR003959">
    <property type="entry name" value="ATPase_AAA_core"/>
</dbReference>
<dbReference type="InterPro" id="IPR019489">
    <property type="entry name" value="Clp_ATPase_C"/>
</dbReference>
<dbReference type="InterPro" id="IPR004491">
    <property type="entry name" value="HslU"/>
</dbReference>
<dbReference type="InterPro" id="IPR001208">
    <property type="entry name" value="MCM_dom"/>
</dbReference>
<dbReference type="InterPro" id="IPR027417">
    <property type="entry name" value="P-loop_NTPase"/>
</dbReference>
<dbReference type="NCBIfam" id="TIGR00390">
    <property type="entry name" value="hslU"/>
    <property type="match status" value="1"/>
</dbReference>
<dbReference type="NCBIfam" id="NF003544">
    <property type="entry name" value="PRK05201.1"/>
    <property type="match status" value="1"/>
</dbReference>
<dbReference type="PANTHER" id="PTHR48102">
    <property type="entry name" value="ATP-DEPENDENT CLP PROTEASE ATP-BINDING SUBUNIT CLPX-LIKE, MITOCHONDRIAL-RELATED"/>
    <property type="match status" value="1"/>
</dbReference>
<dbReference type="PANTHER" id="PTHR48102:SF3">
    <property type="entry name" value="ATP-DEPENDENT PROTEASE ATPASE SUBUNIT HSLU"/>
    <property type="match status" value="1"/>
</dbReference>
<dbReference type="Pfam" id="PF07724">
    <property type="entry name" value="AAA_2"/>
    <property type="match status" value="1"/>
</dbReference>
<dbReference type="Pfam" id="PF00493">
    <property type="entry name" value="MCM"/>
    <property type="match status" value="1"/>
</dbReference>
<dbReference type="SMART" id="SM00382">
    <property type="entry name" value="AAA"/>
    <property type="match status" value="1"/>
</dbReference>
<dbReference type="SMART" id="SM01086">
    <property type="entry name" value="ClpB_D2-small"/>
    <property type="match status" value="1"/>
</dbReference>
<dbReference type="SUPFAM" id="SSF52540">
    <property type="entry name" value="P-loop containing nucleoside triphosphate hydrolases"/>
    <property type="match status" value="1"/>
</dbReference>